<comment type="function">
    <text evidence="1">Quinone reductase that provides resistance to thiol-specific stress caused by electrophilic quinones.</text>
</comment>
<comment type="function">
    <text evidence="1">Also exhibits azoreductase activity. Catalyzes the reductive cleavage of the azo bond in aromatic azo compounds to the corresponding amines.</text>
</comment>
<comment type="catalytic activity">
    <reaction evidence="1">
        <text>2 a quinone + NADH + H(+) = 2 a 1,4-benzosemiquinone + NAD(+)</text>
        <dbReference type="Rhea" id="RHEA:65952"/>
        <dbReference type="ChEBI" id="CHEBI:15378"/>
        <dbReference type="ChEBI" id="CHEBI:57540"/>
        <dbReference type="ChEBI" id="CHEBI:57945"/>
        <dbReference type="ChEBI" id="CHEBI:132124"/>
        <dbReference type="ChEBI" id="CHEBI:134225"/>
    </reaction>
</comment>
<comment type="catalytic activity">
    <reaction evidence="1">
        <text>N,N-dimethyl-1,4-phenylenediamine + anthranilate + 2 NAD(+) = 2-(4-dimethylaminophenyl)diazenylbenzoate + 2 NADH + 2 H(+)</text>
        <dbReference type="Rhea" id="RHEA:55872"/>
        <dbReference type="ChEBI" id="CHEBI:15378"/>
        <dbReference type="ChEBI" id="CHEBI:15783"/>
        <dbReference type="ChEBI" id="CHEBI:16567"/>
        <dbReference type="ChEBI" id="CHEBI:57540"/>
        <dbReference type="ChEBI" id="CHEBI:57945"/>
        <dbReference type="ChEBI" id="CHEBI:71579"/>
        <dbReference type="EC" id="1.7.1.17"/>
    </reaction>
</comment>
<comment type="cofactor">
    <cofactor evidence="1">
        <name>FMN</name>
        <dbReference type="ChEBI" id="CHEBI:58210"/>
    </cofactor>
    <text evidence="1">Binds 1 FMN per subunit.</text>
</comment>
<comment type="subunit">
    <text evidence="1">Homodimer.</text>
</comment>
<comment type="similarity">
    <text evidence="1">Belongs to the azoreductase type 1 family.</text>
</comment>
<feature type="chain" id="PRO_0000245938" description="FMN-dependent NADH:quinone oxidoreductase">
    <location>
        <begin position="1"/>
        <end position="212"/>
    </location>
</feature>
<feature type="binding site" evidence="1">
    <location>
        <position position="10"/>
    </location>
    <ligand>
        <name>FMN</name>
        <dbReference type="ChEBI" id="CHEBI:58210"/>
    </ligand>
</feature>
<feature type="binding site" evidence="1">
    <location>
        <begin position="17"/>
        <end position="19"/>
    </location>
    <ligand>
        <name>FMN</name>
        <dbReference type="ChEBI" id="CHEBI:58210"/>
    </ligand>
</feature>
<proteinExistence type="inferred from homology"/>
<dbReference type="EC" id="1.6.5.-" evidence="1"/>
<dbReference type="EC" id="1.7.1.17" evidence="1"/>
<dbReference type="EMBL" id="BA000026">
    <property type="protein sequence ID" value="BAC43980.1"/>
    <property type="molecule type" value="Genomic_DNA"/>
</dbReference>
<dbReference type="RefSeq" id="WP_011077016.1">
    <property type="nucleotide sequence ID" value="NC_004432.1"/>
</dbReference>
<dbReference type="SMR" id="Q8EWL4"/>
<dbReference type="FunCoup" id="Q8EWL4">
    <property type="interactions" value="6"/>
</dbReference>
<dbReference type="STRING" id="272633.gene:10731288"/>
<dbReference type="KEGG" id="mpe:MYPE1890"/>
<dbReference type="eggNOG" id="COG1182">
    <property type="taxonomic scope" value="Bacteria"/>
</dbReference>
<dbReference type="HOGENOM" id="CLU_088964_2_0_14"/>
<dbReference type="InParanoid" id="Q8EWL4"/>
<dbReference type="Proteomes" id="UP000002522">
    <property type="component" value="Chromosome"/>
</dbReference>
<dbReference type="GO" id="GO:0009055">
    <property type="term" value="F:electron transfer activity"/>
    <property type="evidence" value="ECO:0007669"/>
    <property type="project" value="UniProtKB-UniRule"/>
</dbReference>
<dbReference type="GO" id="GO:0010181">
    <property type="term" value="F:FMN binding"/>
    <property type="evidence" value="ECO:0007669"/>
    <property type="project" value="UniProtKB-UniRule"/>
</dbReference>
<dbReference type="GO" id="GO:0016652">
    <property type="term" value="F:oxidoreductase activity, acting on NAD(P)H as acceptor"/>
    <property type="evidence" value="ECO:0007669"/>
    <property type="project" value="UniProtKB-UniRule"/>
</dbReference>
<dbReference type="GO" id="GO:0016655">
    <property type="term" value="F:oxidoreductase activity, acting on NAD(P)H, quinone or similar compound as acceptor"/>
    <property type="evidence" value="ECO:0007669"/>
    <property type="project" value="InterPro"/>
</dbReference>
<dbReference type="Gene3D" id="3.40.50.360">
    <property type="match status" value="1"/>
</dbReference>
<dbReference type="HAMAP" id="MF_01216">
    <property type="entry name" value="Azoreductase_type1"/>
    <property type="match status" value="1"/>
</dbReference>
<dbReference type="InterPro" id="IPR003680">
    <property type="entry name" value="Flavodoxin_fold"/>
</dbReference>
<dbReference type="InterPro" id="IPR029039">
    <property type="entry name" value="Flavoprotein-like_sf"/>
</dbReference>
<dbReference type="InterPro" id="IPR050104">
    <property type="entry name" value="FMN-dep_NADH:Q_OxRdtase_AzoR1"/>
</dbReference>
<dbReference type="InterPro" id="IPR023048">
    <property type="entry name" value="NADH:quinone_OxRdtase_FMN_depd"/>
</dbReference>
<dbReference type="NCBIfam" id="NF002370">
    <property type="entry name" value="PRK01355.1"/>
    <property type="match status" value="1"/>
</dbReference>
<dbReference type="PANTHER" id="PTHR43741">
    <property type="entry name" value="FMN-DEPENDENT NADH-AZOREDUCTASE 1"/>
    <property type="match status" value="1"/>
</dbReference>
<dbReference type="PANTHER" id="PTHR43741:SF4">
    <property type="entry name" value="FMN-DEPENDENT NADH:QUINONE OXIDOREDUCTASE"/>
    <property type="match status" value="1"/>
</dbReference>
<dbReference type="Pfam" id="PF02525">
    <property type="entry name" value="Flavodoxin_2"/>
    <property type="match status" value="1"/>
</dbReference>
<dbReference type="SUPFAM" id="SSF52218">
    <property type="entry name" value="Flavoproteins"/>
    <property type="match status" value="1"/>
</dbReference>
<reference key="1">
    <citation type="journal article" date="2002" name="Nucleic Acids Res.">
        <title>The complete genomic sequence of Mycoplasma penetrans, an intracellular bacterial pathogen in humans.</title>
        <authorList>
            <person name="Sasaki Y."/>
            <person name="Ishikawa J."/>
            <person name="Yamashita A."/>
            <person name="Oshima K."/>
            <person name="Kenri T."/>
            <person name="Furuya K."/>
            <person name="Yoshino C."/>
            <person name="Horino A."/>
            <person name="Shiba T."/>
            <person name="Sasaki T."/>
            <person name="Hattori M."/>
        </authorList>
    </citation>
    <scope>NUCLEOTIDE SEQUENCE [LARGE SCALE GENOMIC DNA]</scope>
    <source>
        <strain>HF-2</strain>
    </source>
</reference>
<name>AZOR_MALP2</name>
<keyword id="KW-0285">Flavoprotein</keyword>
<keyword id="KW-0288">FMN</keyword>
<keyword id="KW-0520">NAD</keyword>
<keyword id="KW-0560">Oxidoreductase</keyword>
<keyword id="KW-1185">Reference proteome</keyword>
<sequence length="212" mass="23955">MAKLLVIKASMVDKSISFSEELTNRFVKYYLESNPNDEVITLDLNEVPMAQKTLNGSNLKNFFNQEDSDFYIDQLKSVHKVIFSCPMTNFNISATAKNYLDHVLVANKTFSYKYSKKGDAIGLLNHLSVQLLTTQGAPLGWYPWGNHTENLKGTFEFMGTKVVTPILVDGTKIPENANKTPVERINEFDSVIRLKAKEFAALPAVDWKPLEQ</sequence>
<accession>Q8EWL4</accession>
<gene>
    <name evidence="1" type="primary">azoR</name>
    <name type="ordered locus">MYPE1890</name>
</gene>
<organism>
    <name type="scientific">Malacoplasma penetrans (strain HF-2)</name>
    <name type="common">Mycoplasma penetrans</name>
    <dbReference type="NCBI Taxonomy" id="272633"/>
    <lineage>
        <taxon>Bacteria</taxon>
        <taxon>Bacillati</taxon>
        <taxon>Mycoplasmatota</taxon>
        <taxon>Mycoplasmoidales</taxon>
        <taxon>Mycoplasmoidaceae</taxon>
        <taxon>Malacoplasma</taxon>
    </lineage>
</organism>
<protein>
    <recommendedName>
        <fullName evidence="1">FMN-dependent NADH:quinone oxidoreductase</fullName>
        <ecNumber evidence="1">1.6.5.-</ecNumber>
    </recommendedName>
    <alternativeName>
        <fullName evidence="1">Azo-dye reductase</fullName>
    </alternativeName>
    <alternativeName>
        <fullName evidence="1">FMN-dependent NADH-azo compound oxidoreductase</fullName>
    </alternativeName>
    <alternativeName>
        <fullName evidence="1">FMN-dependent NADH-azoreductase</fullName>
        <ecNumber evidence="1">1.7.1.17</ecNumber>
    </alternativeName>
</protein>
<evidence type="ECO:0000255" key="1">
    <source>
        <dbReference type="HAMAP-Rule" id="MF_01216"/>
    </source>
</evidence>